<name>RS10_SYNAS</name>
<comment type="function">
    <text evidence="1">Involved in the binding of tRNA to the ribosomes.</text>
</comment>
<comment type="subunit">
    <text evidence="1">Part of the 30S ribosomal subunit.</text>
</comment>
<comment type="similarity">
    <text evidence="1">Belongs to the universal ribosomal protein uS10 family.</text>
</comment>
<comment type="sequence caution" evidence="2">
    <conflict type="erroneous initiation">
        <sequence resource="EMBL-CDS" id="ABC76179"/>
    </conflict>
</comment>
<protein>
    <recommendedName>
        <fullName evidence="1">Small ribosomal subunit protein uS10</fullName>
    </recommendedName>
    <alternativeName>
        <fullName evidence="2">30S ribosomal protein S10</fullName>
    </alternativeName>
</protein>
<keyword id="KW-1185">Reference proteome</keyword>
<keyword id="KW-0687">Ribonucleoprotein</keyword>
<keyword id="KW-0689">Ribosomal protein</keyword>
<dbReference type="EMBL" id="CP000252">
    <property type="protein sequence ID" value="ABC76179.1"/>
    <property type="status" value="ALT_INIT"/>
    <property type="molecule type" value="Genomic_DNA"/>
</dbReference>
<dbReference type="RefSeq" id="WP_041584590.1">
    <property type="nucleotide sequence ID" value="NC_007759.1"/>
</dbReference>
<dbReference type="SMR" id="Q2LQA2"/>
<dbReference type="FunCoup" id="Q2LQA2">
    <property type="interactions" value="582"/>
</dbReference>
<dbReference type="STRING" id="56780.SYN_00984"/>
<dbReference type="KEGG" id="sat:SYN_00984"/>
<dbReference type="eggNOG" id="COG0051">
    <property type="taxonomic scope" value="Bacteria"/>
</dbReference>
<dbReference type="HOGENOM" id="CLU_122625_1_3_7"/>
<dbReference type="InParanoid" id="Q2LQA2"/>
<dbReference type="OrthoDB" id="9804464at2"/>
<dbReference type="Proteomes" id="UP000001933">
    <property type="component" value="Chromosome"/>
</dbReference>
<dbReference type="GO" id="GO:1990904">
    <property type="term" value="C:ribonucleoprotein complex"/>
    <property type="evidence" value="ECO:0007669"/>
    <property type="project" value="UniProtKB-KW"/>
</dbReference>
<dbReference type="GO" id="GO:0005840">
    <property type="term" value="C:ribosome"/>
    <property type="evidence" value="ECO:0007669"/>
    <property type="project" value="UniProtKB-KW"/>
</dbReference>
<dbReference type="GO" id="GO:0003735">
    <property type="term" value="F:structural constituent of ribosome"/>
    <property type="evidence" value="ECO:0007669"/>
    <property type="project" value="InterPro"/>
</dbReference>
<dbReference type="GO" id="GO:0000049">
    <property type="term" value="F:tRNA binding"/>
    <property type="evidence" value="ECO:0007669"/>
    <property type="project" value="UniProtKB-UniRule"/>
</dbReference>
<dbReference type="GO" id="GO:0006412">
    <property type="term" value="P:translation"/>
    <property type="evidence" value="ECO:0007669"/>
    <property type="project" value="UniProtKB-UniRule"/>
</dbReference>
<dbReference type="FunFam" id="3.30.70.600:FF:000001">
    <property type="entry name" value="30S ribosomal protein S10"/>
    <property type="match status" value="1"/>
</dbReference>
<dbReference type="Gene3D" id="3.30.70.600">
    <property type="entry name" value="Ribosomal protein S10 domain"/>
    <property type="match status" value="1"/>
</dbReference>
<dbReference type="HAMAP" id="MF_00508">
    <property type="entry name" value="Ribosomal_uS10"/>
    <property type="match status" value="1"/>
</dbReference>
<dbReference type="InterPro" id="IPR001848">
    <property type="entry name" value="Ribosomal_uS10"/>
</dbReference>
<dbReference type="InterPro" id="IPR018268">
    <property type="entry name" value="Ribosomal_uS10_CS"/>
</dbReference>
<dbReference type="InterPro" id="IPR027486">
    <property type="entry name" value="Ribosomal_uS10_dom"/>
</dbReference>
<dbReference type="InterPro" id="IPR036838">
    <property type="entry name" value="Ribosomal_uS10_dom_sf"/>
</dbReference>
<dbReference type="NCBIfam" id="NF001861">
    <property type="entry name" value="PRK00596.1"/>
    <property type="match status" value="1"/>
</dbReference>
<dbReference type="NCBIfam" id="TIGR01049">
    <property type="entry name" value="rpsJ_bact"/>
    <property type="match status" value="1"/>
</dbReference>
<dbReference type="PANTHER" id="PTHR11700">
    <property type="entry name" value="30S RIBOSOMAL PROTEIN S10 FAMILY MEMBER"/>
    <property type="match status" value="1"/>
</dbReference>
<dbReference type="Pfam" id="PF00338">
    <property type="entry name" value="Ribosomal_S10"/>
    <property type="match status" value="1"/>
</dbReference>
<dbReference type="PRINTS" id="PR00971">
    <property type="entry name" value="RIBOSOMALS10"/>
</dbReference>
<dbReference type="SMART" id="SM01403">
    <property type="entry name" value="Ribosomal_S10"/>
    <property type="match status" value="1"/>
</dbReference>
<dbReference type="SUPFAM" id="SSF54999">
    <property type="entry name" value="Ribosomal protein S10"/>
    <property type="match status" value="1"/>
</dbReference>
<dbReference type="PROSITE" id="PS00361">
    <property type="entry name" value="RIBOSOMAL_S10"/>
    <property type="match status" value="1"/>
</dbReference>
<gene>
    <name evidence="1" type="primary">rpsJ</name>
    <name type="ordered locus">SYNAS_03000</name>
    <name type="ORF">SYN_00984</name>
</gene>
<accession>Q2LQA2</accession>
<sequence>MKDQKIRIRLKAYDYKLLDRSVEEIVETARRTGARIAGPVPLPTEINKYCVNRSPHVDKKSREQFEIRTHKRLIDIIEPTQSTVDALMKLDLSAGVDVEIKA</sequence>
<reference key="1">
    <citation type="journal article" date="2007" name="Proc. Natl. Acad. Sci. U.S.A.">
        <title>The genome of Syntrophus aciditrophicus: life at the thermodynamic limit of microbial growth.</title>
        <authorList>
            <person name="McInerney M.J."/>
            <person name="Rohlin L."/>
            <person name="Mouttaki H."/>
            <person name="Kim U."/>
            <person name="Krupp R.S."/>
            <person name="Rios-Hernandez L."/>
            <person name="Sieber J."/>
            <person name="Struchtemeyer C.G."/>
            <person name="Bhattacharyya A."/>
            <person name="Campbell J.W."/>
            <person name="Gunsalus R.P."/>
        </authorList>
    </citation>
    <scope>NUCLEOTIDE SEQUENCE [LARGE SCALE GENOMIC DNA]</scope>
    <source>
        <strain>SB</strain>
    </source>
</reference>
<proteinExistence type="inferred from homology"/>
<evidence type="ECO:0000255" key="1">
    <source>
        <dbReference type="HAMAP-Rule" id="MF_00508"/>
    </source>
</evidence>
<evidence type="ECO:0000305" key="2"/>
<feature type="chain" id="PRO_0000237111" description="Small ribosomal subunit protein uS10">
    <location>
        <begin position="1"/>
        <end position="102"/>
    </location>
</feature>
<organism>
    <name type="scientific">Syntrophus aciditrophicus (strain SB)</name>
    <dbReference type="NCBI Taxonomy" id="56780"/>
    <lineage>
        <taxon>Bacteria</taxon>
        <taxon>Pseudomonadati</taxon>
        <taxon>Thermodesulfobacteriota</taxon>
        <taxon>Syntrophia</taxon>
        <taxon>Syntrophales</taxon>
        <taxon>Syntrophaceae</taxon>
        <taxon>Syntrophus</taxon>
    </lineage>
</organism>